<gene>
    <name evidence="1" type="primary">murB</name>
    <name type="ordered locus">spyM18_1063</name>
</gene>
<sequence>MITELHGIDIRENEPLKHYTYTKVGGPADFLAFPRNHYELSRIVAYANKENMPWLVLGNASNLIVRDGGIRGFVIMFDKLNAVHLNGYTLEAEAGANLIETTKIAKFHSLTGFEFACGIPGSIGGAVFMNAGAYGGEISHIFLSAKVLTPSGEIKTISARDMAFGYRHSAIQETGDIVISAKFALKPGNYDTISQEMNRLNHLRQLKQPLEFPSCGSVFKRPPGHFAGQLIMEANLKGHRIGGVEVSEKHAGFMINVADGTAKDYEDLIAYVIETVENHSGVRLEPEVRIIGENL</sequence>
<feature type="chain" id="PRO_0000179275" description="UDP-N-acetylenolpyruvoylglucosamine reductase">
    <location>
        <begin position="1"/>
        <end position="295"/>
    </location>
</feature>
<feature type="domain" description="FAD-binding PCMH-type" evidence="1">
    <location>
        <begin position="23"/>
        <end position="188"/>
    </location>
</feature>
<feature type="active site" evidence="1">
    <location>
        <position position="167"/>
    </location>
</feature>
<feature type="active site" description="Proton donor" evidence="1">
    <location>
        <position position="217"/>
    </location>
</feature>
<feature type="active site" evidence="1">
    <location>
        <position position="287"/>
    </location>
</feature>
<keyword id="KW-0131">Cell cycle</keyword>
<keyword id="KW-0132">Cell division</keyword>
<keyword id="KW-0133">Cell shape</keyword>
<keyword id="KW-0961">Cell wall biogenesis/degradation</keyword>
<keyword id="KW-0963">Cytoplasm</keyword>
<keyword id="KW-0274">FAD</keyword>
<keyword id="KW-0285">Flavoprotein</keyword>
<keyword id="KW-0521">NADP</keyword>
<keyword id="KW-0560">Oxidoreductase</keyword>
<keyword id="KW-0573">Peptidoglycan synthesis</keyword>
<protein>
    <recommendedName>
        <fullName evidence="1">UDP-N-acetylenolpyruvoylglucosamine reductase</fullName>
        <ecNumber evidence="1">1.3.1.98</ecNumber>
    </recommendedName>
    <alternativeName>
        <fullName evidence="1">UDP-N-acetylmuramate dehydrogenase</fullName>
    </alternativeName>
</protein>
<evidence type="ECO:0000255" key="1">
    <source>
        <dbReference type="HAMAP-Rule" id="MF_00037"/>
    </source>
</evidence>
<accession>Q8P150</accession>
<reference key="1">
    <citation type="journal article" date="2002" name="Proc. Natl. Acad. Sci. U.S.A.">
        <title>Genome sequence and comparative microarray analysis of serotype M18 group A Streptococcus strains associated with acute rheumatic fever outbreaks.</title>
        <authorList>
            <person name="Smoot J.C."/>
            <person name="Barbian K.D."/>
            <person name="Van Gompel J.J."/>
            <person name="Smoot L.M."/>
            <person name="Chaussee M.S."/>
            <person name="Sylva G.L."/>
            <person name="Sturdevant D.E."/>
            <person name="Ricklefs S.M."/>
            <person name="Porcella S.F."/>
            <person name="Parkins L.D."/>
            <person name="Beres S.B."/>
            <person name="Campbell D.S."/>
            <person name="Smith T.M."/>
            <person name="Zhang Q."/>
            <person name="Kapur V."/>
            <person name="Daly J.A."/>
            <person name="Veasy L.G."/>
            <person name="Musser J.M."/>
        </authorList>
    </citation>
    <scope>NUCLEOTIDE SEQUENCE [LARGE SCALE GENOMIC DNA]</scope>
    <source>
        <strain>MGAS8232</strain>
    </source>
</reference>
<dbReference type="EC" id="1.3.1.98" evidence="1"/>
<dbReference type="EMBL" id="AE009949">
    <property type="protein sequence ID" value="AAL97687.1"/>
    <property type="molecule type" value="Genomic_DNA"/>
</dbReference>
<dbReference type="RefSeq" id="WP_011017741.1">
    <property type="nucleotide sequence ID" value="NC_003485.1"/>
</dbReference>
<dbReference type="SMR" id="Q8P150"/>
<dbReference type="KEGG" id="spm:spyM18_1063"/>
<dbReference type="HOGENOM" id="CLU_035304_1_1_9"/>
<dbReference type="UniPathway" id="UPA00219"/>
<dbReference type="GO" id="GO:0005829">
    <property type="term" value="C:cytosol"/>
    <property type="evidence" value="ECO:0007669"/>
    <property type="project" value="TreeGrafter"/>
</dbReference>
<dbReference type="GO" id="GO:0071949">
    <property type="term" value="F:FAD binding"/>
    <property type="evidence" value="ECO:0007669"/>
    <property type="project" value="InterPro"/>
</dbReference>
<dbReference type="GO" id="GO:0008762">
    <property type="term" value="F:UDP-N-acetylmuramate dehydrogenase activity"/>
    <property type="evidence" value="ECO:0007669"/>
    <property type="project" value="UniProtKB-UniRule"/>
</dbReference>
<dbReference type="GO" id="GO:0051301">
    <property type="term" value="P:cell division"/>
    <property type="evidence" value="ECO:0007669"/>
    <property type="project" value="UniProtKB-KW"/>
</dbReference>
<dbReference type="GO" id="GO:0071555">
    <property type="term" value="P:cell wall organization"/>
    <property type="evidence" value="ECO:0007669"/>
    <property type="project" value="UniProtKB-KW"/>
</dbReference>
<dbReference type="GO" id="GO:0009252">
    <property type="term" value="P:peptidoglycan biosynthetic process"/>
    <property type="evidence" value="ECO:0007669"/>
    <property type="project" value="UniProtKB-UniRule"/>
</dbReference>
<dbReference type="GO" id="GO:0008360">
    <property type="term" value="P:regulation of cell shape"/>
    <property type="evidence" value="ECO:0007669"/>
    <property type="project" value="UniProtKB-KW"/>
</dbReference>
<dbReference type="Gene3D" id="3.30.465.10">
    <property type="match status" value="1"/>
</dbReference>
<dbReference type="Gene3D" id="3.90.78.10">
    <property type="entry name" value="UDP-N-acetylenolpyruvoylglucosamine reductase, C-terminal domain"/>
    <property type="match status" value="1"/>
</dbReference>
<dbReference type="Gene3D" id="3.30.43.10">
    <property type="entry name" value="Uridine Diphospho-n-acetylenolpyruvylglucosamine Reductase, domain 2"/>
    <property type="match status" value="1"/>
</dbReference>
<dbReference type="HAMAP" id="MF_00037">
    <property type="entry name" value="MurB"/>
    <property type="match status" value="1"/>
</dbReference>
<dbReference type="InterPro" id="IPR016166">
    <property type="entry name" value="FAD-bd_PCMH"/>
</dbReference>
<dbReference type="InterPro" id="IPR036318">
    <property type="entry name" value="FAD-bd_PCMH-like_sf"/>
</dbReference>
<dbReference type="InterPro" id="IPR016167">
    <property type="entry name" value="FAD-bd_PCMH_sub1"/>
</dbReference>
<dbReference type="InterPro" id="IPR016169">
    <property type="entry name" value="FAD-bd_PCMH_sub2"/>
</dbReference>
<dbReference type="InterPro" id="IPR003170">
    <property type="entry name" value="MurB"/>
</dbReference>
<dbReference type="InterPro" id="IPR011601">
    <property type="entry name" value="MurB_C"/>
</dbReference>
<dbReference type="InterPro" id="IPR036635">
    <property type="entry name" value="MurB_C_sf"/>
</dbReference>
<dbReference type="InterPro" id="IPR006094">
    <property type="entry name" value="Oxid_FAD_bind_N"/>
</dbReference>
<dbReference type="NCBIfam" id="TIGR00179">
    <property type="entry name" value="murB"/>
    <property type="match status" value="1"/>
</dbReference>
<dbReference type="NCBIfam" id="NF010480">
    <property type="entry name" value="PRK13905.1"/>
    <property type="match status" value="1"/>
</dbReference>
<dbReference type="PANTHER" id="PTHR21071">
    <property type="entry name" value="UDP-N-ACETYLENOLPYRUVOYLGLUCOSAMINE REDUCTASE"/>
    <property type="match status" value="1"/>
</dbReference>
<dbReference type="PANTHER" id="PTHR21071:SF4">
    <property type="entry name" value="UDP-N-ACETYLENOLPYRUVOYLGLUCOSAMINE REDUCTASE"/>
    <property type="match status" value="1"/>
</dbReference>
<dbReference type="Pfam" id="PF01565">
    <property type="entry name" value="FAD_binding_4"/>
    <property type="match status" value="1"/>
</dbReference>
<dbReference type="Pfam" id="PF02873">
    <property type="entry name" value="MurB_C"/>
    <property type="match status" value="1"/>
</dbReference>
<dbReference type="SUPFAM" id="SSF56176">
    <property type="entry name" value="FAD-binding/transporter-associated domain-like"/>
    <property type="match status" value="1"/>
</dbReference>
<dbReference type="SUPFAM" id="SSF56194">
    <property type="entry name" value="Uridine diphospho-N-Acetylenolpyruvylglucosamine reductase, MurB, C-terminal domain"/>
    <property type="match status" value="1"/>
</dbReference>
<dbReference type="PROSITE" id="PS51387">
    <property type="entry name" value="FAD_PCMH"/>
    <property type="match status" value="1"/>
</dbReference>
<comment type="function">
    <text evidence="1">Cell wall formation.</text>
</comment>
<comment type="catalytic activity">
    <reaction evidence="1">
        <text>UDP-N-acetyl-alpha-D-muramate + NADP(+) = UDP-N-acetyl-3-O-(1-carboxyvinyl)-alpha-D-glucosamine + NADPH + H(+)</text>
        <dbReference type="Rhea" id="RHEA:12248"/>
        <dbReference type="ChEBI" id="CHEBI:15378"/>
        <dbReference type="ChEBI" id="CHEBI:57783"/>
        <dbReference type="ChEBI" id="CHEBI:58349"/>
        <dbReference type="ChEBI" id="CHEBI:68483"/>
        <dbReference type="ChEBI" id="CHEBI:70757"/>
        <dbReference type="EC" id="1.3.1.98"/>
    </reaction>
</comment>
<comment type="cofactor">
    <cofactor evidence="1">
        <name>FAD</name>
        <dbReference type="ChEBI" id="CHEBI:57692"/>
    </cofactor>
</comment>
<comment type="pathway">
    <text evidence="1">Cell wall biogenesis; peptidoglycan biosynthesis.</text>
</comment>
<comment type="subcellular location">
    <subcellularLocation>
        <location evidence="1">Cytoplasm</location>
    </subcellularLocation>
</comment>
<comment type="similarity">
    <text evidence="1">Belongs to the MurB family.</text>
</comment>
<organism>
    <name type="scientific">Streptococcus pyogenes serotype M18 (strain MGAS8232)</name>
    <dbReference type="NCBI Taxonomy" id="186103"/>
    <lineage>
        <taxon>Bacteria</taxon>
        <taxon>Bacillati</taxon>
        <taxon>Bacillota</taxon>
        <taxon>Bacilli</taxon>
        <taxon>Lactobacillales</taxon>
        <taxon>Streptococcaceae</taxon>
        <taxon>Streptococcus</taxon>
    </lineage>
</organism>
<proteinExistence type="inferred from homology"/>
<name>MURB_STRP8</name>